<name>RR8_AETCO</name>
<proteinExistence type="inferred from homology"/>
<comment type="function">
    <text evidence="1">One of the primary rRNA binding proteins, it binds directly to 16S rRNA central domain where it helps coordinate assembly of the platform of the 30S subunit.</text>
</comment>
<comment type="subunit">
    <text evidence="1">Part of the 30S ribosomal subunit.</text>
</comment>
<comment type="subcellular location">
    <subcellularLocation>
        <location>Plastid</location>
        <location>Chloroplast</location>
    </subcellularLocation>
</comment>
<comment type="similarity">
    <text evidence="2">Belongs to the universal ribosomal protein uS8 family.</text>
</comment>
<organism>
    <name type="scientific">Aethionema cordifolium</name>
    <name type="common">Lebanon stonecress</name>
    <dbReference type="NCBI Taxonomy" id="434059"/>
    <lineage>
        <taxon>Eukaryota</taxon>
        <taxon>Viridiplantae</taxon>
        <taxon>Streptophyta</taxon>
        <taxon>Embryophyta</taxon>
        <taxon>Tracheophyta</taxon>
        <taxon>Spermatophyta</taxon>
        <taxon>Magnoliopsida</taxon>
        <taxon>eudicotyledons</taxon>
        <taxon>Gunneridae</taxon>
        <taxon>Pentapetalae</taxon>
        <taxon>rosids</taxon>
        <taxon>malvids</taxon>
        <taxon>Brassicales</taxon>
        <taxon>Brassicaceae</taxon>
        <taxon>Aethionemeae</taxon>
        <taxon>Aethionema</taxon>
    </lineage>
</organism>
<keyword id="KW-0150">Chloroplast</keyword>
<keyword id="KW-0934">Plastid</keyword>
<keyword id="KW-0687">Ribonucleoprotein</keyword>
<keyword id="KW-0689">Ribosomal protein</keyword>
<keyword id="KW-0694">RNA-binding</keyword>
<keyword id="KW-0699">rRNA-binding</keyword>
<geneLocation type="chloroplast"/>
<accession>A4QJF0</accession>
<dbReference type="EMBL" id="AP009366">
    <property type="protein sequence ID" value="BAF49805.1"/>
    <property type="molecule type" value="Genomic_DNA"/>
</dbReference>
<dbReference type="RefSeq" id="YP_001122981.1">
    <property type="nucleotide sequence ID" value="NC_009265.1"/>
</dbReference>
<dbReference type="SMR" id="A4QJF0"/>
<dbReference type="GeneID" id="4968602"/>
<dbReference type="GO" id="GO:0009507">
    <property type="term" value="C:chloroplast"/>
    <property type="evidence" value="ECO:0007669"/>
    <property type="project" value="UniProtKB-SubCell"/>
</dbReference>
<dbReference type="GO" id="GO:1990904">
    <property type="term" value="C:ribonucleoprotein complex"/>
    <property type="evidence" value="ECO:0007669"/>
    <property type="project" value="UniProtKB-KW"/>
</dbReference>
<dbReference type="GO" id="GO:0005840">
    <property type="term" value="C:ribosome"/>
    <property type="evidence" value="ECO:0007669"/>
    <property type="project" value="UniProtKB-KW"/>
</dbReference>
<dbReference type="GO" id="GO:0019843">
    <property type="term" value="F:rRNA binding"/>
    <property type="evidence" value="ECO:0007669"/>
    <property type="project" value="UniProtKB-UniRule"/>
</dbReference>
<dbReference type="GO" id="GO:0003735">
    <property type="term" value="F:structural constituent of ribosome"/>
    <property type="evidence" value="ECO:0007669"/>
    <property type="project" value="InterPro"/>
</dbReference>
<dbReference type="GO" id="GO:0006412">
    <property type="term" value="P:translation"/>
    <property type="evidence" value="ECO:0007669"/>
    <property type="project" value="UniProtKB-UniRule"/>
</dbReference>
<dbReference type="FunFam" id="3.30.1490.10:FF:000001">
    <property type="entry name" value="30S ribosomal protein S8"/>
    <property type="match status" value="1"/>
</dbReference>
<dbReference type="FunFam" id="3.30.1370.30:FF:000004">
    <property type="entry name" value="30S ribosomal protein S8, chloroplastic"/>
    <property type="match status" value="1"/>
</dbReference>
<dbReference type="Gene3D" id="3.30.1370.30">
    <property type="match status" value="1"/>
</dbReference>
<dbReference type="Gene3D" id="3.30.1490.10">
    <property type="match status" value="1"/>
</dbReference>
<dbReference type="HAMAP" id="MF_01302_B">
    <property type="entry name" value="Ribosomal_uS8_B"/>
    <property type="match status" value="1"/>
</dbReference>
<dbReference type="InterPro" id="IPR000630">
    <property type="entry name" value="Ribosomal_uS8"/>
</dbReference>
<dbReference type="InterPro" id="IPR047863">
    <property type="entry name" value="Ribosomal_uS8_CS"/>
</dbReference>
<dbReference type="InterPro" id="IPR035987">
    <property type="entry name" value="Ribosomal_uS8_sf"/>
</dbReference>
<dbReference type="NCBIfam" id="NF001109">
    <property type="entry name" value="PRK00136.1"/>
    <property type="match status" value="1"/>
</dbReference>
<dbReference type="PANTHER" id="PTHR11758">
    <property type="entry name" value="40S RIBOSOMAL PROTEIN S15A"/>
    <property type="match status" value="1"/>
</dbReference>
<dbReference type="Pfam" id="PF00410">
    <property type="entry name" value="Ribosomal_S8"/>
    <property type="match status" value="1"/>
</dbReference>
<dbReference type="SUPFAM" id="SSF56047">
    <property type="entry name" value="Ribosomal protein S8"/>
    <property type="match status" value="1"/>
</dbReference>
<dbReference type="PROSITE" id="PS00053">
    <property type="entry name" value="RIBOSOMAL_S8"/>
    <property type="match status" value="1"/>
</dbReference>
<reference key="1">
    <citation type="submission" date="2007-03" db="EMBL/GenBank/DDBJ databases">
        <title>Sequencing analysis of Aethionema coridifolium chloroplast DNA.</title>
        <authorList>
            <person name="Hosouchi T."/>
            <person name="Tsuruoka H."/>
            <person name="Kotani H."/>
        </authorList>
    </citation>
    <scope>NUCLEOTIDE SEQUENCE [LARGE SCALE GENOMIC DNA]</scope>
</reference>
<evidence type="ECO:0000250" key="1"/>
<evidence type="ECO:0000305" key="2"/>
<feature type="chain" id="PRO_0000290972" description="Small ribosomal subunit protein uS8c">
    <location>
        <begin position="1"/>
        <end position="134"/>
    </location>
</feature>
<protein>
    <recommendedName>
        <fullName evidence="2">Small ribosomal subunit protein uS8c</fullName>
    </recommendedName>
    <alternativeName>
        <fullName>30S ribosomal protein S8, chloroplastic</fullName>
    </alternativeName>
</protein>
<sequence length="134" mass="15493">MGKDTIADIITSIRNADMNRKGTVRIGSTNITESIVKILLREGFIENVRKHRENNQYFLILTLRHRRNKKESYKTILNLKRISRPGLRIYSNSQRIPRILGGIGIVILSTSRGIMTDREARLKRVGGEILCYIW</sequence>
<gene>
    <name type="primary">rps8</name>
</gene>